<accession>P84841</accession>
<name>ES1B_PELSA</name>
<reference evidence="6" key="1">
    <citation type="journal article" date="2006" name="J. Endocrinol.">
        <title>Skin secretions of Rana saharica frogs reveal antimicrobial peptides esculentins-1 and -1B and brevinins-1E and -2EC with novel insulin releasing activity.</title>
        <authorList>
            <person name="Marenah L."/>
            <person name="Flatt P.R."/>
            <person name="Orr D.F."/>
            <person name="Shaw C."/>
            <person name="Abdel-Wahab Y.H.A."/>
        </authorList>
    </citation>
    <scope>PROTEIN SEQUENCE</scope>
    <scope>FUNCTION</scope>
    <scope>SUBCELLULAR LOCATION</scope>
    <scope>TISSUE SPECIFICITY</scope>
    <scope>MASS SPECTROMETRY</scope>
    <source>
        <tissue evidence="4">Skin secretion</tissue>
    </source>
</reference>
<evidence type="ECO:0000250" key="1"/>
<evidence type="ECO:0000250" key="2">
    <source>
        <dbReference type="UniProtKB" id="P32414"/>
    </source>
</evidence>
<evidence type="ECO:0000255" key="3"/>
<evidence type="ECO:0000269" key="4">
    <source>
    </source>
</evidence>
<evidence type="ECO:0000303" key="5">
    <source>
    </source>
</evidence>
<evidence type="ECO:0000305" key="6"/>
<proteinExistence type="evidence at protein level"/>
<dbReference type="SMR" id="P84841"/>
<dbReference type="GO" id="GO:0005576">
    <property type="term" value="C:extracellular region"/>
    <property type="evidence" value="ECO:0000314"/>
    <property type="project" value="UniProtKB"/>
</dbReference>
<dbReference type="GO" id="GO:0050829">
    <property type="term" value="P:defense response to Gram-negative bacterium"/>
    <property type="evidence" value="ECO:0000250"/>
    <property type="project" value="UniProtKB"/>
</dbReference>
<dbReference type="GO" id="GO:0050830">
    <property type="term" value="P:defense response to Gram-positive bacterium"/>
    <property type="evidence" value="ECO:0000250"/>
    <property type="project" value="UniProtKB"/>
</dbReference>
<dbReference type="GO" id="GO:0032024">
    <property type="term" value="P:positive regulation of insulin secretion"/>
    <property type="evidence" value="ECO:0000314"/>
    <property type="project" value="UniProtKB"/>
</dbReference>
<dbReference type="InterPro" id="IPR012521">
    <property type="entry name" value="Antimicrobial_frog_2"/>
</dbReference>
<dbReference type="Pfam" id="PF08023">
    <property type="entry name" value="Antimicrobial_2"/>
    <property type="match status" value="1"/>
</dbReference>
<keyword id="KW-0878">Amphibian defense peptide</keyword>
<keyword id="KW-0044">Antibiotic</keyword>
<keyword id="KW-0929">Antimicrobial</keyword>
<keyword id="KW-0903">Direct protein sequencing</keyword>
<keyword id="KW-1015">Disulfide bond</keyword>
<keyword id="KW-0964">Secreted</keyword>
<organism>
    <name type="scientific">Pelophylax saharicus</name>
    <name type="common">Sahara frog</name>
    <name type="synonym">Rana saharica</name>
    <dbReference type="NCBI Taxonomy" id="70019"/>
    <lineage>
        <taxon>Eukaryota</taxon>
        <taxon>Metazoa</taxon>
        <taxon>Chordata</taxon>
        <taxon>Craniata</taxon>
        <taxon>Vertebrata</taxon>
        <taxon>Euteleostomi</taxon>
        <taxon>Amphibia</taxon>
        <taxon>Batrachia</taxon>
        <taxon>Anura</taxon>
        <taxon>Neobatrachia</taxon>
        <taxon>Ranoidea</taxon>
        <taxon>Ranidae</taxon>
        <taxon>Pelophylax</taxon>
    </lineage>
</organism>
<feature type="peptide" id="PRO_0000233923" description="Esculentin-1B" evidence="4">
    <location>
        <begin position="1"/>
        <end position="46"/>
    </location>
</feature>
<feature type="disulfide bond" evidence="2">
    <location>
        <begin position="40"/>
        <end position="46"/>
    </location>
</feature>
<comment type="function">
    <text evidence="1 4">Antimicrobial peptide (By similarity). Stimulates insulin secretion by BRIN-BD11 cells in vitro (PubMed:16394170).</text>
</comment>
<comment type="subcellular location">
    <subcellularLocation>
        <location evidence="4">Secreted</location>
    </subcellularLocation>
</comment>
<comment type="tissue specificity">
    <text evidence="4">Expressed by the skin glands.</text>
</comment>
<comment type="mass spectrometry" mass="4801.2" method="MALDI" evidence="4"/>
<comment type="similarity">
    <text evidence="3">Belongs to the frog skin active peptide (FSAP) family. Esculentin subfamily.</text>
</comment>
<comment type="online information" name="The antimicrobial peptide database">
    <link uri="https://wangapd3.com/database/query_output.php?ID=00082"/>
</comment>
<protein>
    <recommendedName>
        <fullName evidence="5">Esculentin-1B</fullName>
    </recommendedName>
</protein>
<sequence length="46" mass="4803">GIFSKLAGKKLKNLLISGLKNVGKEVGMDVVRTGIDIAGCKIKGEC</sequence>